<dbReference type="EMBL" id="GG704911">
    <property type="protein sequence ID" value="EAS37154.3"/>
    <property type="molecule type" value="Genomic_DNA"/>
</dbReference>
<dbReference type="RefSeq" id="XP_001248737.1">
    <property type="nucleotide sequence ID" value="XM_001248736.2"/>
</dbReference>
<dbReference type="SMR" id="Q1E4K5"/>
<dbReference type="FunCoup" id="Q1E4K5">
    <property type="interactions" value="530"/>
</dbReference>
<dbReference type="STRING" id="246410.Q1E4K5"/>
<dbReference type="GeneID" id="4567547"/>
<dbReference type="KEGG" id="cim:CIMG_02508"/>
<dbReference type="VEuPathDB" id="FungiDB:CIMG_02508"/>
<dbReference type="InParanoid" id="Q1E4K5"/>
<dbReference type="OMA" id="AVYQEHK"/>
<dbReference type="OrthoDB" id="6738456at2759"/>
<dbReference type="Proteomes" id="UP000001261">
    <property type="component" value="Unassembled WGS sequence"/>
</dbReference>
<dbReference type="GO" id="GO:0000421">
    <property type="term" value="C:autophagosome membrane"/>
    <property type="evidence" value="ECO:0007669"/>
    <property type="project" value="UniProtKB-SubCell"/>
</dbReference>
<dbReference type="GO" id="GO:0031410">
    <property type="term" value="C:cytoplasmic vesicle"/>
    <property type="evidence" value="ECO:0007669"/>
    <property type="project" value="UniProtKB-KW"/>
</dbReference>
<dbReference type="GO" id="GO:0006914">
    <property type="term" value="P:autophagy"/>
    <property type="evidence" value="ECO:0007669"/>
    <property type="project" value="UniProtKB-KW"/>
</dbReference>
<dbReference type="GO" id="GO:0015031">
    <property type="term" value="P:protein transport"/>
    <property type="evidence" value="ECO:0007669"/>
    <property type="project" value="UniProtKB-KW"/>
</dbReference>
<dbReference type="CDD" id="cd16128">
    <property type="entry name" value="Ubl_ATG8"/>
    <property type="match status" value="1"/>
</dbReference>
<dbReference type="FunFam" id="3.10.20.90:FF:000010">
    <property type="entry name" value="Autophagy-related protein"/>
    <property type="match status" value="1"/>
</dbReference>
<dbReference type="Gene3D" id="3.10.20.90">
    <property type="entry name" value="Phosphatidylinositol 3-kinase Catalytic Subunit, Chain A, domain 1"/>
    <property type="match status" value="1"/>
</dbReference>
<dbReference type="InterPro" id="IPR004241">
    <property type="entry name" value="Atg8-like"/>
</dbReference>
<dbReference type="InterPro" id="IPR029071">
    <property type="entry name" value="Ubiquitin-like_domsf"/>
</dbReference>
<dbReference type="PANTHER" id="PTHR10969">
    <property type="entry name" value="MICROTUBULE-ASSOCIATED PROTEINS 1A/1B LIGHT CHAIN 3-RELATED"/>
    <property type="match status" value="1"/>
</dbReference>
<dbReference type="Pfam" id="PF02991">
    <property type="entry name" value="ATG8"/>
    <property type="match status" value="1"/>
</dbReference>
<dbReference type="SUPFAM" id="SSF54236">
    <property type="entry name" value="Ubiquitin-like"/>
    <property type="match status" value="1"/>
</dbReference>
<reference key="1">
    <citation type="journal article" date="2009" name="Genome Res.">
        <title>Comparative genomic analyses of the human fungal pathogens Coccidioides and their relatives.</title>
        <authorList>
            <person name="Sharpton T.J."/>
            <person name="Stajich J.E."/>
            <person name="Rounsley S.D."/>
            <person name="Gardner M.J."/>
            <person name="Wortman J.R."/>
            <person name="Jordar V.S."/>
            <person name="Maiti R."/>
            <person name="Kodira C.D."/>
            <person name="Neafsey D.E."/>
            <person name="Zeng Q."/>
            <person name="Hung C.-Y."/>
            <person name="McMahan C."/>
            <person name="Muszewska A."/>
            <person name="Grynberg M."/>
            <person name="Mandel M.A."/>
            <person name="Kellner E.M."/>
            <person name="Barker B.M."/>
            <person name="Galgiani J.N."/>
            <person name="Orbach M.J."/>
            <person name="Kirkland T.N."/>
            <person name="Cole G.T."/>
            <person name="Henn M.R."/>
            <person name="Birren B.W."/>
            <person name="Taylor J.W."/>
        </authorList>
    </citation>
    <scope>NUCLEOTIDE SEQUENCE [LARGE SCALE GENOMIC DNA]</scope>
    <source>
        <strain>RS</strain>
    </source>
</reference>
<reference key="2">
    <citation type="journal article" date="2010" name="Genome Res.">
        <title>Population genomic sequencing of Coccidioides fungi reveals recent hybridization and transposon control.</title>
        <authorList>
            <person name="Neafsey D.E."/>
            <person name="Barker B.M."/>
            <person name="Sharpton T.J."/>
            <person name="Stajich J.E."/>
            <person name="Park D.J."/>
            <person name="Whiston E."/>
            <person name="Hung C.-Y."/>
            <person name="McMahan C."/>
            <person name="White J."/>
            <person name="Sykes S."/>
            <person name="Heiman D."/>
            <person name="Young S."/>
            <person name="Zeng Q."/>
            <person name="Abouelleil A."/>
            <person name="Aftuck L."/>
            <person name="Bessette D."/>
            <person name="Brown A."/>
            <person name="FitzGerald M."/>
            <person name="Lui A."/>
            <person name="Macdonald J.P."/>
            <person name="Priest M."/>
            <person name="Orbach M.J."/>
            <person name="Galgiani J.N."/>
            <person name="Kirkland T.N."/>
            <person name="Cole G.T."/>
            <person name="Birren B.W."/>
            <person name="Henn M.R."/>
            <person name="Taylor J.W."/>
            <person name="Rounsley S.D."/>
        </authorList>
    </citation>
    <scope>GENOME REANNOTATION</scope>
    <source>
        <strain>RS</strain>
    </source>
</reference>
<gene>
    <name type="primary">ATG8</name>
    <name type="ORF">CIMG_02508</name>
</gene>
<organism>
    <name type="scientific">Coccidioides immitis (strain RS)</name>
    <name type="common">Valley fever fungus</name>
    <dbReference type="NCBI Taxonomy" id="246410"/>
    <lineage>
        <taxon>Eukaryota</taxon>
        <taxon>Fungi</taxon>
        <taxon>Dikarya</taxon>
        <taxon>Ascomycota</taxon>
        <taxon>Pezizomycotina</taxon>
        <taxon>Eurotiomycetes</taxon>
        <taxon>Eurotiomycetidae</taxon>
        <taxon>Onygenales</taxon>
        <taxon>Onygenaceae</taxon>
        <taxon>Coccidioides</taxon>
    </lineage>
</organism>
<feature type="chain" id="PRO_0000317886" description="Autophagy-related protein 8">
    <location>
        <begin position="1"/>
        <end position="116"/>
    </location>
</feature>
<feature type="propeptide" id="PRO_0000317887" description="Removed in mature form" evidence="1">
    <location>
        <position position="117"/>
    </location>
</feature>
<feature type="site" description="Cleavage; by ATG4" evidence="1">
    <location>
        <begin position="116"/>
        <end position="117"/>
    </location>
</feature>
<feature type="lipid moiety-binding region" description="Phosphatidylethanolamine amidated glycine" evidence="1">
    <location>
        <position position="116"/>
    </location>
</feature>
<accession>Q1E4K5</accession>
<accession>J3KLX7</accession>
<protein>
    <recommendedName>
        <fullName>Autophagy-related protein 8</fullName>
    </recommendedName>
    <alternativeName>
        <fullName>Autophagy-related ubiquitin-like modifier ATG8</fullName>
    </alternativeName>
</protein>
<keyword id="KW-0072">Autophagy</keyword>
<keyword id="KW-0968">Cytoplasmic vesicle</keyword>
<keyword id="KW-0449">Lipoprotein</keyword>
<keyword id="KW-0472">Membrane</keyword>
<keyword id="KW-0653">Protein transport</keyword>
<keyword id="KW-1185">Reference proteome</keyword>
<keyword id="KW-0813">Transport</keyword>
<keyword id="KW-0833">Ubl conjugation pathway</keyword>
<keyword id="KW-0926">Vacuole</keyword>
<name>ATG8_COCIM</name>
<proteinExistence type="inferred from homology"/>
<comment type="function">
    <text evidence="1">Ubiquitin-like modifier involved in autophagosome formation. With ATG4, mediates the delivery of the autophagosomes to the vacuole via the microtubule cytoskeleton. Required for selective autophagic degradation of the nucleus (nucleophagy) as well as for mitophagy which contributes to regulate mitochondrial quantity and quality by eliminating the mitochondria to a basal level to fulfill cellular energy requirements and preventing excess ROS production. Participates also in membrane fusion events that take place in the early secretory pathway. Also involved in endoplasmic reticulum-specific autophagic process and is essential for the survival of cells subjected to severe ER stress. The ATG8-PE conjugate mediates tethering between adjacent membranes and stimulates membrane hemifusion, leading to expansion of the autophagosomal membrane during autophagy.</text>
</comment>
<comment type="subcellular location">
    <subcellularLocation>
        <location evidence="1">Cytoplasmic vesicle</location>
        <location evidence="1">Autophagosome membrane</location>
        <topology evidence="1">Lipid-anchor</topology>
    </subcellularLocation>
    <subcellularLocation>
        <location evidence="1">Vacuole membrane</location>
        <topology evidence="1">Lipid-anchor</topology>
    </subcellularLocation>
</comment>
<comment type="PTM">
    <text evidence="1">The C-terminal Asn-117 residue is removed by ATG4 to expose Gly-116 at the C-terminus. The c-terminal Gly is then amidated with phosphatidylethanolamine by an activating system similar to that for ubiquitin.</text>
</comment>
<comment type="similarity">
    <text evidence="2">Belongs to the ATG8 family.</text>
</comment>
<evidence type="ECO:0000250" key="1">
    <source>
        <dbReference type="UniProtKB" id="P38182"/>
    </source>
</evidence>
<evidence type="ECO:0000305" key="2"/>
<sequence>MRSKFKDEHPFEKRKAEAERIRQKYADRIPVICEKVEKSDIATIDKKKYLVPADLTVGQFVYVIRKRIKLSPEKAIFIFVDEVLPPTAALMSSIYEEHKDDDGFLYITYSGENTFGN</sequence>